<reference key="1">
    <citation type="journal article" date="2004" name="Proc. Natl. Acad. Sci. U.S.A.">
        <title>The genome sequence of the probiotic intestinal bacterium Lactobacillus johnsonii NCC 533.</title>
        <authorList>
            <person name="Pridmore R.D."/>
            <person name="Berger B."/>
            <person name="Desiere F."/>
            <person name="Vilanova D."/>
            <person name="Barretto C."/>
            <person name="Pittet A.-C."/>
            <person name="Zwahlen M.-C."/>
            <person name="Rouvet M."/>
            <person name="Altermann E."/>
            <person name="Barrangou R."/>
            <person name="Mollet B."/>
            <person name="Mercenier A."/>
            <person name="Klaenhammer T."/>
            <person name="Arigoni F."/>
            <person name="Schell M.A."/>
        </authorList>
    </citation>
    <scope>NUCLEOTIDE SEQUENCE [LARGE SCALE GENOMIC DNA]</scope>
    <source>
        <strain>CNCM I-1225 / La1 / NCC 533</strain>
    </source>
</reference>
<proteinExistence type="inferred from homology"/>
<gene>
    <name evidence="1" type="primary">atpF</name>
    <name type="ordered locus">LJ_0936</name>
</gene>
<sequence>MQFMFAALKLELGDTLYYLLIFAALLLLVKHFAWGPVTKMMEERRQKVISDLDQAESDRKKAELLANQREAALKDSKQEATQILSTAKSNAEKTKNNIISQADQEAAAIRKRASEDAAQAKTDALNEARDQVADISVAIAEKVISKNLSAADQKDLVDQFIKGLND</sequence>
<keyword id="KW-0066">ATP synthesis</keyword>
<keyword id="KW-1003">Cell membrane</keyword>
<keyword id="KW-0138">CF(0)</keyword>
<keyword id="KW-0375">Hydrogen ion transport</keyword>
<keyword id="KW-0406">Ion transport</keyword>
<keyword id="KW-0472">Membrane</keyword>
<keyword id="KW-0812">Transmembrane</keyword>
<keyword id="KW-1133">Transmembrane helix</keyword>
<keyword id="KW-0813">Transport</keyword>
<feature type="chain" id="PRO_0000368546" description="ATP synthase subunit b">
    <location>
        <begin position="1"/>
        <end position="166"/>
    </location>
</feature>
<feature type="transmembrane region" description="Helical" evidence="1">
    <location>
        <begin position="15"/>
        <end position="37"/>
    </location>
</feature>
<comment type="function">
    <text evidence="1">F(1)F(0) ATP synthase produces ATP from ADP in the presence of a proton or sodium gradient. F-type ATPases consist of two structural domains, F(1) containing the extramembraneous catalytic core and F(0) containing the membrane proton channel, linked together by a central stalk and a peripheral stalk. During catalysis, ATP synthesis in the catalytic domain of F(1) is coupled via a rotary mechanism of the central stalk subunits to proton translocation.</text>
</comment>
<comment type="function">
    <text evidence="1">Component of the F(0) channel, it forms part of the peripheral stalk, linking F(1) to F(0).</text>
</comment>
<comment type="subunit">
    <text evidence="1">F-type ATPases have 2 components, F(1) - the catalytic core - and F(0) - the membrane proton channel. F(1) has five subunits: alpha(3), beta(3), gamma(1), delta(1), epsilon(1). F(0) has three main subunits: a(1), b(2) and c(10-14). The alpha and beta chains form an alternating ring which encloses part of the gamma chain. F(1) is attached to F(0) by a central stalk formed by the gamma and epsilon chains, while a peripheral stalk is formed by the delta and b chains.</text>
</comment>
<comment type="subcellular location">
    <subcellularLocation>
        <location evidence="1">Cell membrane</location>
        <topology evidence="1">Single-pass membrane protein</topology>
    </subcellularLocation>
</comment>
<comment type="similarity">
    <text evidence="1">Belongs to the ATPase B chain family.</text>
</comment>
<name>ATPF_LACJO</name>
<protein>
    <recommendedName>
        <fullName evidence="1">ATP synthase subunit b</fullName>
    </recommendedName>
    <alternativeName>
        <fullName evidence="1">ATP synthase F(0) sector subunit b</fullName>
    </alternativeName>
    <alternativeName>
        <fullName evidence="1">ATPase subunit I</fullName>
    </alternativeName>
    <alternativeName>
        <fullName evidence="1">F-type ATPase subunit b</fullName>
        <shortName evidence="1">F-ATPase subunit b</shortName>
    </alternativeName>
</protein>
<organism>
    <name type="scientific">Lactobacillus johnsonii (strain CNCM I-12250 / La1 / NCC 533)</name>
    <dbReference type="NCBI Taxonomy" id="257314"/>
    <lineage>
        <taxon>Bacteria</taxon>
        <taxon>Bacillati</taxon>
        <taxon>Bacillota</taxon>
        <taxon>Bacilli</taxon>
        <taxon>Lactobacillales</taxon>
        <taxon>Lactobacillaceae</taxon>
        <taxon>Lactobacillus</taxon>
    </lineage>
</organism>
<accession>Q74K19</accession>
<dbReference type="EMBL" id="AE017198">
    <property type="protein sequence ID" value="AAS08757.1"/>
    <property type="molecule type" value="Genomic_DNA"/>
</dbReference>
<dbReference type="RefSeq" id="WP_004894154.1">
    <property type="nucleotide sequence ID" value="NC_005362.1"/>
</dbReference>
<dbReference type="SMR" id="Q74K19"/>
<dbReference type="GeneID" id="83570631"/>
<dbReference type="KEGG" id="ljo:LJ_0936"/>
<dbReference type="eggNOG" id="COG0711">
    <property type="taxonomic scope" value="Bacteria"/>
</dbReference>
<dbReference type="HOGENOM" id="CLU_079215_4_2_9"/>
<dbReference type="Proteomes" id="UP000000581">
    <property type="component" value="Chromosome"/>
</dbReference>
<dbReference type="GO" id="GO:0005886">
    <property type="term" value="C:plasma membrane"/>
    <property type="evidence" value="ECO:0007669"/>
    <property type="project" value="UniProtKB-SubCell"/>
</dbReference>
<dbReference type="GO" id="GO:0045259">
    <property type="term" value="C:proton-transporting ATP synthase complex"/>
    <property type="evidence" value="ECO:0007669"/>
    <property type="project" value="UniProtKB-KW"/>
</dbReference>
<dbReference type="GO" id="GO:0046933">
    <property type="term" value="F:proton-transporting ATP synthase activity, rotational mechanism"/>
    <property type="evidence" value="ECO:0007669"/>
    <property type="project" value="UniProtKB-UniRule"/>
</dbReference>
<dbReference type="GO" id="GO:0046961">
    <property type="term" value="F:proton-transporting ATPase activity, rotational mechanism"/>
    <property type="evidence" value="ECO:0007669"/>
    <property type="project" value="TreeGrafter"/>
</dbReference>
<dbReference type="CDD" id="cd06503">
    <property type="entry name" value="ATP-synt_Fo_b"/>
    <property type="match status" value="1"/>
</dbReference>
<dbReference type="Gene3D" id="6.10.250.1580">
    <property type="match status" value="1"/>
</dbReference>
<dbReference type="HAMAP" id="MF_01398">
    <property type="entry name" value="ATP_synth_b_bprime"/>
    <property type="match status" value="1"/>
</dbReference>
<dbReference type="InterPro" id="IPR002146">
    <property type="entry name" value="ATP_synth_b/b'su_bac/chlpt"/>
</dbReference>
<dbReference type="InterPro" id="IPR005864">
    <property type="entry name" value="ATP_synth_F0_bsu_bac"/>
</dbReference>
<dbReference type="InterPro" id="IPR050059">
    <property type="entry name" value="ATP_synthase_B_chain"/>
</dbReference>
<dbReference type="NCBIfam" id="TIGR01144">
    <property type="entry name" value="ATP_synt_b"/>
    <property type="match status" value="1"/>
</dbReference>
<dbReference type="PANTHER" id="PTHR33445:SF1">
    <property type="entry name" value="ATP SYNTHASE SUBUNIT B"/>
    <property type="match status" value="1"/>
</dbReference>
<dbReference type="PANTHER" id="PTHR33445">
    <property type="entry name" value="ATP SYNTHASE SUBUNIT B', CHLOROPLASTIC"/>
    <property type="match status" value="1"/>
</dbReference>
<dbReference type="Pfam" id="PF00430">
    <property type="entry name" value="ATP-synt_B"/>
    <property type="match status" value="1"/>
</dbReference>
<evidence type="ECO:0000255" key="1">
    <source>
        <dbReference type="HAMAP-Rule" id="MF_01398"/>
    </source>
</evidence>